<name>PFMAE_PESFW</name>
<comment type="function">
    <text evidence="8 9 11 12">Non-reducing polyketide synthase; part of the gene cluster that mediates the biosynthesis of dihydroxynaphthalene (DHN)-melanin, a bluish-green pigment forming a dark layer in the conidial wall that protects the conidia from UV radiations (PubMed:28517364). The first step of the pathway is the production of the pentaketide 1,3,6,8-tetrahydroxynaphthalene (1,3,6,8-THN or T4HN) by the polyketide synthase PfmaE though condensation of acetyl-CoA with malonyl-CoA. T4HN is not stable and easily oxidizes into the stable form flaviolin (PubMed:28517364). T4HN is also substrate of the hydroxynaphthalene reductase PfmaG to yield scytalone (PubMed:28517364). The scytalone dehydratase PfmaJ then reduces scytalone to 1,3,8-THN (PubMed:31116900). 1,3,8-THN is then substrate of the hydroxynaphthalene reductase PfmaI to yield vermelone (Probable). Vermelone is further converted by the multicopper oxidase PfmaD to 1,8-DHN (Probable). Finally the laccase PFICI_06862 transforms 1,8-DHN to DHN-melanin (Probable). The roles of the 5-oxoprolinase PfmaA and the proline iminopeptidase PfmaB within the cluster have not been elucidated yet (Probable).</text>
</comment>
<comment type="pathway">
    <text evidence="8">Pigment biosynthesis; melanin biosynthesis.</text>
</comment>
<comment type="induction">
    <text evidence="8 9">Expression is positively regulazed by the cluster-specific transcription factor pfmaF.</text>
</comment>
<comment type="domain">
    <text evidence="1 2">Multidomain protein; including a starter unit:ACP transacylase (SAT) that selects the starter unit; a ketosynthase (KS) that catalyzes repeated decarboxylative condensation to elongate the polyketide backbone; a malonyl-CoA:ACP transacylase (MAT) that selects and transfers the extender unit malonyl-CoA; a product template (PT) domain that controls the immediate cyclization regioselectivity of the reactive polyketide backbone; a thioesterase (TE) domain that releases the newly synthesized peptide from the enzyme; and 2 acyl-carrier protein (ACP) that serve as the tethers of the growing and completed polyketide via its phosphopantetheinyl arm.</text>
</comment>
<comment type="disruption phenotype">
    <text evidence="8">Leads to decreased pigmentation, the lack of the black pigment cell wall layer, but also incomplete multicellular formation (PubMed:28517364). Abolishes the production of scytalone (PubMed:28517364). Significantly reduces the germination rates under UV treatment (PubMed:28517364).</text>
</comment>
<protein>
    <recommendedName>
        <fullName evidence="10">Conidial pigment polyketide synthase PfmaE</fullName>
        <ecNumber evidence="11">2.3.1.-</ecNumber>
    </recommendedName>
    <alternativeName>
        <fullName evidence="10">Conidial pigment biosynthesis cluster protein E</fullName>
    </alternativeName>
</protein>
<proteinExistence type="evidence at transcript level"/>
<feature type="chain" id="PRO_0000445352" description="Conidial pigment polyketide synthase PfmaE">
    <location>
        <begin position="1"/>
        <end position="2155"/>
    </location>
</feature>
<feature type="domain" description="Ketosynthase family 3 (KS3)" evidence="4">
    <location>
        <begin position="381"/>
        <end position="813"/>
    </location>
</feature>
<feature type="domain" description="PKS/mFAS DH" evidence="5">
    <location>
        <begin position="1297"/>
        <end position="1604"/>
    </location>
</feature>
<feature type="domain" description="Carrier 1" evidence="3">
    <location>
        <begin position="1653"/>
        <end position="1730"/>
    </location>
</feature>
<feature type="domain" description="Carrier 2" evidence="3">
    <location>
        <begin position="1779"/>
        <end position="1856"/>
    </location>
</feature>
<feature type="region of interest" description="N-terminal acylcarrier protein transacylase domain (SAT)" evidence="2">
    <location>
        <begin position="8"/>
        <end position="245"/>
    </location>
</feature>
<feature type="region of interest" description="Malonyl-CoA:ACP transacylase (MAT) domain" evidence="2">
    <location>
        <begin position="910"/>
        <end position="1231"/>
    </location>
</feature>
<feature type="region of interest" description="Product template (PT) domain" evidence="2">
    <location>
        <begin position="1293"/>
        <end position="1608"/>
    </location>
</feature>
<feature type="region of interest" description="N-terminal hotdog fold" evidence="5">
    <location>
        <begin position="1297"/>
        <end position="1428"/>
    </location>
</feature>
<feature type="region of interest" description="C-terminal hotdog fold" evidence="5">
    <location>
        <begin position="1455"/>
        <end position="1604"/>
    </location>
</feature>
<feature type="region of interest" description="Disordered" evidence="7">
    <location>
        <begin position="1738"/>
        <end position="1782"/>
    </location>
</feature>
<feature type="region of interest" description="Disordered" evidence="7">
    <location>
        <begin position="1855"/>
        <end position="1892"/>
    </location>
</feature>
<feature type="region of interest" description="Thioesterase (TE) domain" evidence="2">
    <location>
        <begin position="1911"/>
        <end position="2041"/>
    </location>
</feature>
<feature type="compositionally biased region" description="Basic and acidic residues" evidence="7">
    <location>
        <begin position="1866"/>
        <end position="1883"/>
    </location>
</feature>
<feature type="active site" description="For beta-ketoacyl synthase activity" evidence="4">
    <location>
        <position position="553"/>
    </location>
</feature>
<feature type="active site" description="For beta-ketoacyl synthase activity" evidence="4">
    <location>
        <position position="688"/>
    </location>
</feature>
<feature type="active site" description="For beta-ketoacyl synthase activity" evidence="4">
    <location>
        <position position="731"/>
    </location>
</feature>
<feature type="active site" description="For acyl/malonyl transferase activity" evidence="6">
    <location>
        <position position="1001"/>
    </location>
</feature>
<feature type="active site" description="Proton acceptor; for dehydratase activity" evidence="5">
    <location>
        <position position="1329"/>
    </location>
</feature>
<feature type="active site" description="Proton donor; for dehydratase activity" evidence="5">
    <location>
        <position position="1516"/>
    </location>
</feature>
<feature type="modified residue" description="O-(pantetheine 4'-phosphoryl)serine" evidence="3">
    <location>
        <position position="1690"/>
    </location>
</feature>
<feature type="modified residue" description="O-(pantetheine 4'-phosphoryl)serine" evidence="3">
    <location>
        <position position="1816"/>
    </location>
</feature>
<dbReference type="EC" id="2.3.1.-" evidence="11"/>
<dbReference type="EMBL" id="KI912112">
    <property type="protein sequence ID" value="ETS82099.1"/>
    <property type="molecule type" value="Genomic_DNA"/>
</dbReference>
<dbReference type="RefSeq" id="XP_007833873.1">
    <property type="nucleotide sequence ID" value="XM_007835682.1"/>
</dbReference>
<dbReference type="SMR" id="W3X7U2"/>
<dbReference type="STRING" id="1229662.W3X7U2"/>
<dbReference type="ESTHER" id="pesfw-pfmae">
    <property type="family name" value="Thioesterase"/>
</dbReference>
<dbReference type="GeneID" id="19272114"/>
<dbReference type="KEGG" id="pfy:PFICI_07101"/>
<dbReference type="eggNOG" id="KOG1202">
    <property type="taxonomic scope" value="Eukaryota"/>
</dbReference>
<dbReference type="HOGENOM" id="CLU_000022_6_0_1"/>
<dbReference type="InParanoid" id="W3X7U2"/>
<dbReference type="OMA" id="YCRGDGC"/>
<dbReference type="OrthoDB" id="329835at2759"/>
<dbReference type="UniPathway" id="UPA00785"/>
<dbReference type="Proteomes" id="UP000030651">
    <property type="component" value="Unassembled WGS sequence"/>
</dbReference>
<dbReference type="GO" id="GO:0004315">
    <property type="term" value="F:3-oxoacyl-[acyl-carrier-protein] synthase activity"/>
    <property type="evidence" value="ECO:0007669"/>
    <property type="project" value="InterPro"/>
</dbReference>
<dbReference type="GO" id="GO:0004312">
    <property type="term" value="F:fatty acid synthase activity"/>
    <property type="evidence" value="ECO:0007669"/>
    <property type="project" value="TreeGrafter"/>
</dbReference>
<dbReference type="GO" id="GO:0031177">
    <property type="term" value="F:phosphopantetheine binding"/>
    <property type="evidence" value="ECO:0007669"/>
    <property type="project" value="InterPro"/>
</dbReference>
<dbReference type="GO" id="GO:0006633">
    <property type="term" value="P:fatty acid biosynthetic process"/>
    <property type="evidence" value="ECO:0007669"/>
    <property type="project" value="InterPro"/>
</dbReference>
<dbReference type="GO" id="GO:0042438">
    <property type="term" value="P:melanin biosynthetic process"/>
    <property type="evidence" value="ECO:0007669"/>
    <property type="project" value="UniProtKB-UniPathway"/>
</dbReference>
<dbReference type="GO" id="GO:0030639">
    <property type="term" value="P:polyketide biosynthetic process"/>
    <property type="evidence" value="ECO:0007669"/>
    <property type="project" value="UniProtKB-ARBA"/>
</dbReference>
<dbReference type="GO" id="GO:0009403">
    <property type="term" value="P:toxin biosynthetic process"/>
    <property type="evidence" value="ECO:0007669"/>
    <property type="project" value="UniProtKB-ARBA"/>
</dbReference>
<dbReference type="CDD" id="cd00833">
    <property type="entry name" value="PKS"/>
    <property type="match status" value="1"/>
</dbReference>
<dbReference type="FunFam" id="3.40.366.10:FF:000002">
    <property type="entry name" value="Probable polyketide synthase 2"/>
    <property type="match status" value="1"/>
</dbReference>
<dbReference type="FunFam" id="1.10.1200.10:FF:000011">
    <property type="entry name" value="Sterigmatocystin biosynthesis polyketide synthase"/>
    <property type="match status" value="1"/>
</dbReference>
<dbReference type="FunFam" id="3.10.129.110:FF:000001">
    <property type="entry name" value="Sterigmatocystin biosynthesis polyketide synthase"/>
    <property type="match status" value="1"/>
</dbReference>
<dbReference type="Gene3D" id="3.30.70.3290">
    <property type="match status" value="1"/>
</dbReference>
<dbReference type="Gene3D" id="3.40.47.10">
    <property type="match status" value="1"/>
</dbReference>
<dbReference type="Gene3D" id="1.10.1200.10">
    <property type="entry name" value="ACP-like"/>
    <property type="match status" value="2"/>
</dbReference>
<dbReference type="Gene3D" id="3.40.50.1820">
    <property type="entry name" value="alpha/beta hydrolase"/>
    <property type="match status" value="1"/>
</dbReference>
<dbReference type="Gene3D" id="3.40.366.10">
    <property type="entry name" value="Malonyl-Coenzyme A Acyl Carrier Protein, domain 2"/>
    <property type="match status" value="2"/>
</dbReference>
<dbReference type="Gene3D" id="3.10.129.110">
    <property type="entry name" value="Polyketide synthase dehydratase"/>
    <property type="match status" value="1"/>
</dbReference>
<dbReference type="InterPro" id="IPR029058">
    <property type="entry name" value="AB_hydrolase_fold"/>
</dbReference>
<dbReference type="InterPro" id="IPR001227">
    <property type="entry name" value="Ac_transferase_dom_sf"/>
</dbReference>
<dbReference type="InterPro" id="IPR036736">
    <property type="entry name" value="ACP-like_sf"/>
</dbReference>
<dbReference type="InterPro" id="IPR014043">
    <property type="entry name" value="Acyl_transferase_dom"/>
</dbReference>
<dbReference type="InterPro" id="IPR016035">
    <property type="entry name" value="Acyl_Trfase/lysoPLipase"/>
</dbReference>
<dbReference type="InterPro" id="IPR018201">
    <property type="entry name" value="Ketoacyl_synth_AS"/>
</dbReference>
<dbReference type="InterPro" id="IPR014031">
    <property type="entry name" value="Ketoacyl_synth_C"/>
</dbReference>
<dbReference type="InterPro" id="IPR014030">
    <property type="entry name" value="Ketoacyl_synth_N"/>
</dbReference>
<dbReference type="InterPro" id="IPR016036">
    <property type="entry name" value="Malonyl_transacylase_ACP-bd"/>
</dbReference>
<dbReference type="InterPro" id="IPR020841">
    <property type="entry name" value="PKS_Beta-ketoAc_synthase_dom"/>
</dbReference>
<dbReference type="InterPro" id="IPR042104">
    <property type="entry name" value="PKS_dehydratase_sf"/>
</dbReference>
<dbReference type="InterPro" id="IPR049551">
    <property type="entry name" value="PKS_DH_C"/>
</dbReference>
<dbReference type="InterPro" id="IPR049900">
    <property type="entry name" value="PKS_mFAS_DH"/>
</dbReference>
<dbReference type="InterPro" id="IPR050091">
    <property type="entry name" value="PKS_NRPS_Biosynth_Enz"/>
</dbReference>
<dbReference type="InterPro" id="IPR020806">
    <property type="entry name" value="PKS_PP-bd"/>
</dbReference>
<dbReference type="InterPro" id="IPR009081">
    <property type="entry name" value="PP-bd_ACP"/>
</dbReference>
<dbReference type="InterPro" id="IPR006162">
    <property type="entry name" value="Ppantetheine_attach_site"/>
</dbReference>
<dbReference type="InterPro" id="IPR030918">
    <property type="entry name" value="PT_fungal_PKS"/>
</dbReference>
<dbReference type="InterPro" id="IPR032088">
    <property type="entry name" value="SAT"/>
</dbReference>
<dbReference type="InterPro" id="IPR001031">
    <property type="entry name" value="Thioesterase"/>
</dbReference>
<dbReference type="InterPro" id="IPR016039">
    <property type="entry name" value="Thiolase-like"/>
</dbReference>
<dbReference type="NCBIfam" id="TIGR04532">
    <property type="entry name" value="PT_fungal_PKS"/>
    <property type="match status" value="1"/>
</dbReference>
<dbReference type="PANTHER" id="PTHR43775">
    <property type="entry name" value="FATTY ACID SYNTHASE"/>
    <property type="match status" value="1"/>
</dbReference>
<dbReference type="PANTHER" id="PTHR43775:SF37">
    <property type="entry name" value="SI:DKEY-61P9.11"/>
    <property type="match status" value="1"/>
</dbReference>
<dbReference type="Pfam" id="PF00698">
    <property type="entry name" value="Acyl_transf_1"/>
    <property type="match status" value="1"/>
</dbReference>
<dbReference type="Pfam" id="PF22621">
    <property type="entry name" value="CurL-like_PKS_C"/>
    <property type="match status" value="1"/>
</dbReference>
<dbReference type="Pfam" id="PF00109">
    <property type="entry name" value="ketoacyl-synt"/>
    <property type="match status" value="1"/>
</dbReference>
<dbReference type="Pfam" id="PF02801">
    <property type="entry name" value="Ketoacyl-synt_C"/>
    <property type="match status" value="1"/>
</dbReference>
<dbReference type="Pfam" id="PF00550">
    <property type="entry name" value="PP-binding"/>
    <property type="match status" value="2"/>
</dbReference>
<dbReference type="Pfam" id="PF14765">
    <property type="entry name" value="PS-DH"/>
    <property type="match status" value="1"/>
</dbReference>
<dbReference type="Pfam" id="PF16073">
    <property type="entry name" value="SAT"/>
    <property type="match status" value="1"/>
</dbReference>
<dbReference type="Pfam" id="PF00975">
    <property type="entry name" value="Thioesterase"/>
    <property type="match status" value="1"/>
</dbReference>
<dbReference type="SMART" id="SM00827">
    <property type="entry name" value="PKS_AT"/>
    <property type="match status" value="1"/>
</dbReference>
<dbReference type="SMART" id="SM00825">
    <property type="entry name" value="PKS_KS"/>
    <property type="match status" value="1"/>
</dbReference>
<dbReference type="SMART" id="SM00823">
    <property type="entry name" value="PKS_PP"/>
    <property type="match status" value="2"/>
</dbReference>
<dbReference type="SMART" id="SM01294">
    <property type="entry name" value="PKS_PP_betabranch"/>
    <property type="match status" value="1"/>
</dbReference>
<dbReference type="SUPFAM" id="SSF47336">
    <property type="entry name" value="ACP-like"/>
    <property type="match status" value="2"/>
</dbReference>
<dbReference type="SUPFAM" id="SSF53474">
    <property type="entry name" value="alpha/beta-Hydrolases"/>
    <property type="match status" value="1"/>
</dbReference>
<dbReference type="SUPFAM" id="SSF52151">
    <property type="entry name" value="FabD/lysophospholipase-like"/>
    <property type="match status" value="2"/>
</dbReference>
<dbReference type="SUPFAM" id="SSF55048">
    <property type="entry name" value="Probable ACP-binding domain of malonyl-CoA ACP transacylase"/>
    <property type="match status" value="1"/>
</dbReference>
<dbReference type="SUPFAM" id="SSF53901">
    <property type="entry name" value="Thiolase-like"/>
    <property type="match status" value="1"/>
</dbReference>
<dbReference type="PROSITE" id="PS50075">
    <property type="entry name" value="CARRIER"/>
    <property type="match status" value="2"/>
</dbReference>
<dbReference type="PROSITE" id="PS00606">
    <property type="entry name" value="KS3_1"/>
    <property type="match status" value="1"/>
</dbReference>
<dbReference type="PROSITE" id="PS52004">
    <property type="entry name" value="KS3_2"/>
    <property type="match status" value="1"/>
</dbReference>
<dbReference type="PROSITE" id="PS00012">
    <property type="entry name" value="PHOSPHOPANTETHEINE"/>
    <property type="match status" value="1"/>
</dbReference>
<dbReference type="PROSITE" id="PS52019">
    <property type="entry name" value="PKS_MFAS_DH"/>
    <property type="match status" value="1"/>
</dbReference>
<sequence length="2155" mass="233253">MAEQMSYLLFGDQSLDTHGFLADFYRQGNPSILAKTFLQRAGDSLRDEIDRLPRCQRDRIPQFRTLQQLNERYHQQTIKFPGIDSALLCITQLAHYIDRSEKEHQDVTAAENTYLSGLCTGLFAATAIASSPSLSSLLPIAVQVSLMAYRVGSHVASLAERLSPSDERSESWTYVVPGAKETDAKPILAEFHETEGISPAAQAYVSAVSASNIAISGPPATLKSLFSKDLFESRPTAIPVYGPYHAPHLHAAANLDKILRLDDEAVTAAFDGSKPRSHIVSCVTGQSFPETDTKSLLKAVVHEILNEPLLFHKALKGSLNSAKEFKGSRVLVIPYGPTQAASTLANLLKAQTKLEVVLRTPPQVSRESNGASIGNHGSSGKCKLAIVGMAGRFPDAASHEKLWELLEKGIDAHRVVPADRFPVETHVDPTGKAINTSHTPYGCWIENPGLFDPRFFNMSPREAFQTDPMQRMALTTAYEALEMSGYVPNRTPSTRLDRIGTFYGQTSDDWREINAAQEVDTYYITGGVRAFGPGRINYHFGFSGPSLNIDTACSSSAAALQVACTSLWAKECDTAIVGGLSCMTNSDIFAGLSRGQFLSKKGNCNTFDNDADGYCRADACASVIVKRLDDALADKDNILAVVLGTSTNHSADAISITHPHGPTQSVLSRAILDEAGVDPLDVDYVEMHGTGTQAGDGTEMVSVTDVFAPANRHRASDRPLYLGAIKSNVGHGEAASGITALSKVLLMMKKNSIPPHVGIKGEINKTFPKDLGARGVNIAFHKTPFQRKDGKPRRIFVNNFSAAGGNTGLLLEDGPRYKTAEADPRSVHVVTVTAKSKSAMIRNAEGLVQWMEQNPSTPVSDVAYTTTARKIQHYWRMNVAAGSLPEAIQAIKERLKSTFVPVSPEQPKVAFMFTGQGSHYAGLGKELYAHYAIFRDAIDEYDQLAGIHGFPSFLPLIDGSEPDVQNLSPVVVQLGLCSFEMALARLWQSWGIQPGAVLGHSLGEYAALHVAGVLSASDTIYLVGARAQLLVNKCTAGTHAMLAVQGSVETVKEALGARAESTNVACINGPRETVLSGASSEVAEIAEQLGGAGFKCTQLKVPFAFHSAQVEPILDDFESLARSVRFETPKVPVISPLLGKLVDNEPINPAYLRNHAREAVNFLGGLVSAQQSGMIDEKTVWLEVGPHPVCANMVKAAFGATTIAVPTLRRNEATYKTLSSSLCTLHSAGLNLDWNEFHRDFDASVRLLDLPSYAFDYKNYWLQYTGDWSLTKNRGALPASTKAIEAPKPKLSTTTVQKVVREEVKGDIAILETESEMTRDDLRLVCSGHMVNGTALTPSSLYGDMAITACEYAYKLLRPDAKNIGCNVSHMEVPKTLIFNGKAKSQVLRMSVKANAAEGFADLSWTSGEGAQKTEHANCKVFFGDNEEWLGEFERVNYLIKSRIDALRAAEQRGDASKIGRGLAYKLFAALVDYDRRYRGMESVILDSETCEATAKVVFQTSPEDGTFHTAPYWIDSVCHISGFILNGSDAIDSREQVFISHGWGSMRFAERLSAEKTYQTYIRMQNVKGSKMMSGDAYIFDGDKLIGIAGDVRFQAIPRKVLNVVLPPQGAAAAGSAPARAPAAAAKPAAKAAPKEKKQVTSANLPAVNKSLTKNSVVAQVMEIIAKETGVSHDELADNIAFSDLGVDSLMGLTISGRLREELELNVDSHAFNDHATVGAFKAFLAQFESADAAMVEENAHSSASSDSADMETESNFTTPSDDSEKDEVKGDAPAADGNVSELQDIVRSTISAEMGVEVEEVIAAPDLAALGMDSLMSLSILGILREKTGLNIPSDLLGHNPSLKDIEKALGIEDKPKRAAPKSAKQEPAKPEPKVQGEAKAHTNPVDNYPHRKATSVLLQGNHRTAKKQLFMIPDGSGSATSYTEISEVGSDVAVWGLFSPFMKTPDEYNCGVYGMATKFIQEMKRRQPEGPYAVAGWSAGGVIAYEIVNQLTKANEEVSNLLIIDAPCPITIEPLPAGLHAWFASIGLLGEGDDAEAKKIPEWLLPHFAASVTALSNYDAEPIPADKCPKVTVIWCEDGVCKLPTDPRPDPYPTGHALFLLDNRSDFGPNRWDEYLDSKKMTFHHMPGNHFSMMHGPLAKQLGGFMRDGMKS</sequence>
<gene>
    <name evidence="10" type="primary">PfmaE</name>
    <name type="ORF">PFICI_07101</name>
</gene>
<reference key="1">
    <citation type="journal article" date="2015" name="BMC Genomics">
        <title>Genomic and transcriptomic analysis of the endophytic fungus Pestalotiopsis fici reveals its lifestyle and high potential for synthesis of natural products.</title>
        <authorList>
            <person name="Wang X."/>
            <person name="Zhang X."/>
            <person name="Liu L."/>
            <person name="Xiang M."/>
            <person name="Wang W."/>
            <person name="Sun X."/>
            <person name="Che Y."/>
            <person name="Guo L."/>
            <person name="Liu G."/>
            <person name="Guo L."/>
            <person name="Wang C."/>
            <person name="Yin W.B."/>
            <person name="Stadler M."/>
            <person name="Zhang X."/>
            <person name="Liu X."/>
        </authorList>
    </citation>
    <scope>NUCLEOTIDE SEQUENCE [LARGE SCALE GENOMIC DNA]</scope>
    <source>
        <strain>W106-1 / CGMCC3.15140</strain>
    </source>
</reference>
<reference key="2">
    <citation type="journal article" date="2017" name="Mol. Microbiol.">
        <title>A cryptic pigment biosynthetic pathway uncovered by heterologous expression is essential for conidial development in Pestalotiopsis fici.</title>
        <authorList>
            <person name="Zhang P."/>
            <person name="Wang X."/>
            <person name="Fan A."/>
            <person name="Zheng Y."/>
            <person name="Liu X."/>
            <person name="Wang S."/>
            <person name="Zou H."/>
            <person name="Oakley B.R."/>
            <person name="Keller N.P."/>
            <person name="Yin W.B."/>
        </authorList>
    </citation>
    <scope>FUNCTION</scope>
    <scope>DISRUPTION PHENOTYPE</scope>
    <scope>INDUCTION</scope>
    <scope>PATHWAY</scope>
</reference>
<reference key="3">
    <citation type="journal article" date="2019" name="Mol. Microbiol.">
        <title>Two transcription factors cooperatively regulate DHN melanin biosynthesis and development in Pestalotiopsis fici.</title>
        <authorList>
            <person name="Zhang P."/>
            <person name="Zhou S."/>
            <person name="Wang G."/>
            <person name="An Z."/>
            <person name="Liu X."/>
            <person name="Li K."/>
            <person name="Yin W.B."/>
        </authorList>
    </citation>
    <scope>INDUCTION</scope>
    <scope>FUNCTION</scope>
</reference>
<keyword id="KW-0470">Melanin biosynthesis</keyword>
<keyword id="KW-0511">Multifunctional enzyme</keyword>
<keyword id="KW-0596">Phosphopantetheine</keyword>
<keyword id="KW-0597">Phosphoprotein</keyword>
<keyword id="KW-1185">Reference proteome</keyword>
<keyword id="KW-0677">Repeat</keyword>
<keyword id="KW-0808">Transferase</keyword>
<evidence type="ECO:0000250" key="1">
    <source>
        <dbReference type="UniProtKB" id="Q5B0D0"/>
    </source>
</evidence>
<evidence type="ECO:0000255" key="2"/>
<evidence type="ECO:0000255" key="3">
    <source>
        <dbReference type="PROSITE-ProRule" id="PRU00258"/>
    </source>
</evidence>
<evidence type="ECO:0000255" key="4">
    <source>
        <dbReference type="PROSITE-ProRule" id="PRU01348"/>
    </source>
</evidence>
<evidence type="ECO:0000255" key="5">
    <source>
        <dbReference type="PROSITE-ProRule" id="PRU01363"/>
    </source>
</evidence>
<evidence type="ECO:0000255" key="6">
    <source>
        <dbReference type="PROSITE-ProRule" id="PRU10022"/>
    </source>
</evidence>
<evidence type="ECO:0000256" key="7">
    <source>
        <dbReference type="SAM" id="MobiDB-lite"/>
    </source>
</evidence>
<evidence type="ECO:0000269" key="8">
    <source>
    </source>
</evidence>
<evidence type="ECO:0000269" key="9">
    <source>
    </source>
</evidence>
<evidence type="ECO:0000303" key="10">
    <source>
    </source>
</evidence>
<evidence type="ECO:0000305" key="11">
    <source>
    </source>
</evidence>
<evidence type="ECO:0000305" key="12">
    <source>
    </source>
</evidence>
<organism>
    <name type="scientific">Pestalotiopsis fici (strain W106-1 / CGMCC3.15140)</name>
    <dbReference type="NCBI Taxonomy" id="1229662"/>
    <lineage>
        <taxon>Eukaryota</taxon>
        <taxon>Fungi</taxon>
        <taxon>Dikarya</taxon>
        <taxon>Ascomycota</taxon>
        <taxon>Pezizomycotina</taxon>
        <taxon>Sordariomycetes</taxon>
        <taxon>Xylariomycetidae</taxon>
        <taxon>Amphisphaeriales</taxon>
        <taxon>Sporocadaceae</taxon>
        <taxon>Pestalotiopsis</taxon>
    </lineage>
</organism>
<accession>W3X7U2</accession>